<sequence>MAVIYYDKDCDLSLIEKKLIGIVGYGAQGHAHAQNLRDSGLKVIVACVEGGRGWKKATADGFEVMCVAEMAKKADIIMMLAPDTSQAKIYKDSVEQGLKPGKMLMFAHGFNIHYGQIVPPSFVDVTMIAPKCPGYMLRQVFTEGAGAPSLIAVEQDASGKAKELALAYAKGIGSNRAGILETTFAEETETDLFGEQAVLCGGTTSLVKAGFETLVEAGYQPEVAYFECLHELKLIVDLMYQGGIAYMRDSISDTAKYGDFTRGPRVINEDTYETMGEILGEIQDGSFAKEWILENQAGRPVYNSLRRMESEHLIEEVGAELRSMMSWLKKKK</sequence>
<feature type="chain" id="PRO_1000080626" description="Ketol-acid reductoisomerase (NADP(+))">
    <location>
        <begin position="1"/>
        <end position="332"/>
    </location>
</feature>
<feature type="domain" description="KARI N-terminal Rossmann" evidence="2">
    <location>
        <begin position="1"/>
        <end position="182"/>
    </location>
</feature>
<feature type="domain" description="KARI C-terminal knotted" evidence="3">
    <location>
        <begin position="183"/>
        <end position="328"/>
    </location>
</feature>
<feature type="active site" evidence="1">
    <location>
        <position position="108"/>
    </location>
</feature>
<feature type="binding site" evidence="1">
    <location>
        <begin position="25"/>
        <end position="28"/>
    </location>
    <ligand>
        <name>NADP(+)</name>
        <dbReference type="ChEBI" id="CHEBI:58349"/>
    </ligand>
</feature>
<feature type="binding site" evidence="1">
    <location>
        <begin position="83"/>
        <end position="86"/>
    </location>
    <ligand>
        <name>NADP(+)</name>
        <dbReference type="ChEBI" id="CHEBI:58349"/>
    </ligand>
</feature>
<feature type="binding site" evidence="1">
    <location>
        <position position="134"/>
    </location>
    <ligand>
        <name>NADP(+)</name>
        <dbReference type="ChEBI" id="CHEBI:58349"/>
    </ligand>
</feature>
<feature type="binding site" evidence="1">
    <location>
        <position position="191"/>
    </location>
    <ligand>
        <name>Mg(2+)</name>
        <dbReference type="ChEBI" id="CHEBI:18420"/>
        <label>1</label>
    </ligand>
</feature>
<feature type="binding site" evidence="1">
    <location>
        <position position="191"/>
    </location>
    <ligand>
        <name>Mg(2+)</name>
        <dbReference type="ChEBI" id="CHEBI:18420"/>
        <label>2</label>
    </ligand>
</feature>
<feature type="binding site" evidence="1">
    <location>
        <position position="195"/>
    </location>
    <ligand>
        <name>Mg(2+)</name>
        <dbReference type="ChEBI" id="CHEBI:18420"/>
        <label>1</label>
    </ligand>
</feature>
<feature type="binding site" evidence="1">
    <location>
        <position position="227"/>
    </location>
    <ligand>
        <name>Mg(2+)</name>
        <dbReference type="ChEBI" id="CHEBI:18420"/>
        <label>2</label>
    </ligand>
</feature>
<feature type="binding site" evidence="1">
    <location>
        <position position="231"/>
    </location>
    <ligand>
        <name>Mg(2+)</name>
        <dbReference type="ChEBI" id="CHEBI:18420"/>
        <label>2</label>
    </ligand>
</feature>
<feature type="binding site" evidence="1">
    <location>
        <position position="252"/>
    </location>
    <ligand>
        <name>substrate</name>
    </ligand>
</feature>
<comment type="function">
    <text evidence="1">Involved in the biosynthesis of branched-chain amino acids (BCAA). Catalyzes an alkyl-migration followed by a ketol-acid reduction of (S)-2-acetolactate (S2AL) to yield (R)-2,3-dihydroxy-isovalerate. In the isomerase reaction, S2AL is rearranged via a Mg-dependent methyl migration to produce 3-hydroxy-3-methyl-2-ketobutyrate (HMKB). In the reductase reaction, this 2-ketoacid undergoes a metal-dependent reduction by NADPH to yield (R)-2,3-dihydroxy-isovalerate.</text>
</comment>
<comment type="catalytic activity">
    <reaction evidence="1">
        <text>(2R)-2,3-dihydroxy-3-methylbutanoate + NADP(+) = (2S)-2-acetolactate + NADPH + H(+)</text>
        <dbReference type="Rhea" id="RHEA:22068"/>
        <dbReference type="ChEBI" id="CHEBI:15378"/>
        <dbReference type="ChEBI" id="CHEBI:49072"/>
        <dbReference type="ChEBI" id="CHEBI:57783"/>
        <dbReference type="ChEBI" id="CHEBI:58349"/>
        <dbReference type="ChEBI" id="CHEBI:58476"/>
        <dbReference type="EC" id="1.1.1.86"/>
    </reaction>
</comment>
<comment type="catalytic activity">
    <reaction evidence="1">
        <text>(2R,3R)-2,3-dihydroxy-3-methylpentanoate + NADP(+) = (S)-2-ethyl-2-hydroxy-3-oxobutanoate + NADPH + H(+)</text>
        <dbReference type="Rhea" id="RHEA:13493"/>
        <dbReference type="ChEBI" id="CHEBI:15378"/>
        <dbReference type="ChEBI" id="CHEBI:49256"/>
        <dbReference type="ChEBI" id="CHEBI:49258"/>
        <dbReference type="ChEBI" id="CHEBI:57783"/>
        <dbReference type="ChEBI" id="CHEBI:58349"/>
        <dbReference type="EC" id="1.1.1.86"/>
    </reaction>
</comment>
<comment type="cofactor">
    <cofactor evidence="1">
        <name>Mg(2+)</name>
        <dbReference type="ChEBI" id="CHEBI:18420"/>
    </cofactor>
    <text evidence="1">Binds 2 magnesium ions per subunit.</text>
</comment>
<comment type="pathway">
    <text evidence="1">Amino-acid biosynthesis; L-isoleucine biosynthesis; L-isoleucine from 2-oxobutanoate: step 2/4.</text>
</comment>
<comment type="pathway">
    <text evidence="1">Amino-acid biosynthesis; L-valine biosynthesis; L-valine from pyruvate: step 2/4.</text>
</comment>
<comment type="similarity">
    <text evidence="1">Belongs to the ketol-acid reductoisomerase family.</text>
</comment>
<dbReference type="EC" id="1.1.1.86" evidence="1"/>
<dbReference type="EMBL" id="CP000688">
    <property type="protein sequence ID" value="ABQ17334.1"/>
    <property type="molecule type" value="Genomic_DNA"/>
</dbReference>
<dbReference type="SMR" id="A5FR44"/>
<dbReference type="KEGG" id="deb:DehaBAV1_0750"/>
<dbReference type="PATRIC" id="fig|216389.18.peg.799"/>
<dbReference type="HOGENOM" id="CLU_033821_0_1_0"/>
<dbReference type="UniPathway" id="UPA00047">
    <property type="reaction ID" value="UER00056"/>
</dbReference>
<dbReference type="UniPathway" id="UPA00049">
    <property type="reaction ID" value="UER00060"/>
</dbReference>
<dbReference type="GO" id="GO:0005829">
    <property type="term" value="C:cytosol"/>
    <property type="evidence" value="ECO:0007669"/>
    <property type="project" value="TreeGrafter"/>
</dbReference>
<dbReference type="GO" id="GO:0004455">
    <property type="term" value="F:ketol-acid reductoisomerase activity"/>
    <property type="evidence" value="ECO:0007669"/>
    <property type="project" value="UniProtKB-UniRule"/>
</dbReference>
<dbReference type="GO" id="GO:0000287">
    <property type="term" value="F:magnesium ion binding"/>
    <property type="evidence" value="ECO:0007669"/>
    <property type="project" value="UniProtKB-UniRule"/>
</dbReference>
<dbReference type="GO" id="GO:0050661">
    <property type="term" value="F:NADP binding"/>
    <property type="evidence" value="ECO:0007669"/>
    <property type="project" value="InterPro"/>
</dbReference>
<dbReference type="GO" id="GO:0009097">
    <property type="term" value="P:isoleucine biosynthetic process"/>
    <property type="evidence" value="ECO:0007669"/>
    <property type="project" value="UniProtKB-UniRule"/>
</dbReference>
<dbReference type="GO" id="GO:0009099">
    <property type="term" value="P:L-valine biosynthetic process"/>
    <property type="evidence" value="ECO:0007669"/>
    <property type="project" value="UniProtKB-UniRule"/>
</dbReference>
<dbReference type="FunFam" id="3.40.50.720:FF:000023">
    <property type="entry name" value="Ketol-acid reductoisomerase (NADP(+))"/>
    <property type="match status" value="1"/>
</dbReference>
<dbReference type="Gene3D" id="6.10.240.10">
    <property type="match status" value="1"/>
</dbReference>
<dbReference type="Gene3D" id="3.40.50.720">
    <property type="entry name" value="NAD(P)-binding Rossmann-like Domain"/>
    <property type="match status" value="1"/>
</dbReference>
<dbReference type="HAMAP" id="MF_00435">
    <property type="entry name" value="IlvC"/>
    <property type="match status" value="1"/>
</dbReference>
<dbReference type="InterPro" id="IPR008927">
    <property type="entry name" value="6-PGluconate_DH-like_C_sf"/>
</dbReference>
<dbReference type="InterPro" id="IPR013023">
    <property type="entry name" value="KARI"/>
</dbReference>
<dbReference type="InterPro" id="IPR000506">
    <property type="entry name" value="KARI_C"/>
</dbReference>
<dbReference type="InterPro" id="IPR013116">
    <property type="entry name" value="KARI_N"/>
</dbReference>
<dbReference type="InterPro" id="IPR014359">
    <property type="entry name" value="KARI_prok"/>
</dbReference>
<dbReference type="InterPro" id="IPR036291">
    <property type="entry name" value="NAD(P)-bd_dom_sf"/>
</dbReference>
<dbReference type="NCBIfam" id="TIGR00465">
    <property type="entry name" value="ilvC"/>
    <property type="match status" value="1"/>
</dbReference>
<dbReference type="NCBIfam" id="NF004017">
    <property type="entry name" value="PRK05479.1"/>
    <property type="match status" value="1"/>
</dbReference>
<dbReference type="NCBIfam" id="NF009940">
    <property type="entry name" value="PRK13403.1"/>
    <property type="match status" value="1"/>
</dbReference>
<dbReference type="PANTHER" id="PTHR21371">
    <property type="entry name" value="KETOL-ACID REDUCTOISOMERASE, MITOCHONDRIAL"/>
    <property type="match status" value="1"/>
</dbReference>
<dbReference type="PANTHER" id="PTHR21371:SF1">
    <property type="entry name" value="KETOL-ACID REDUCTOISOMERASE, MITOCHONDRIAL"/>
    <property type="match status" value="1"/>
</dbReference>
<dbReference type="Pfam" id="PF01450">
    <property type="entry name" value="KARI_C"/>
    <property type="match status" value="1"/>
</dbReference>
<dbReference type="Pfam" id="PF07991">
    <property type="entry name" value="KARI_N"/>
    <property type="match status" value="1"/>
</dbReference>
<dbReference type="PIRSF" id="PIRSF000116">
    <property type="entry name" value="IlvC_gammaproteo"/>
    <property type="match status" value="1"/>
</dbReference>
<dbReference type="SUPFAM" id="SSF48179">
    <property type="entry name" value="6-phosphogluconate dehydrogenase C-terminal domain-like"/>
    <property type="match status" value="1"/>
</dbReference>
<dbReference type="SUPFAM" id="SSF51735">
    <property type="entry name" value="NAD(P)-binding Rossmann-fold domains"/>
    <property type="match status" value="1"/>
</dbReference>
<dbReference type="PROSITE" id="PS51851">
    <property type="entry name" value="KARI_C"/>
    <property type="match status" value="1"/>
</dbReference>
<dbReference type="PROSITE" id="PS51850">
    <property type="entry name" value="KARI_N"/>
    <property type="match status" value="1"/>
</dbReference>
<accession>A5FR44</accession>
<proteinExistence type="inferred from homology"/>
<protein>
    <recommendedName>
        <fullName evidence="1">Ketol-acid reductoisomerase (NADP(+))</fullName>
        <shortName evidence="1">KARI</shortName>
        <ecNumber evidence="1">1.1.1.86</ecNumber>
    </recommendedName>
    <alternativeName>
        <fullName evidence="1">Acetohydroxy-acid isomeroreductase</fullName>
        <shortName evidence="1">AHIR</shortName>
    </alternativeName>
    <alternativeName>
        <fullName evidence="1">Alpha-keto-beta-hydroxylacyl reductoisomerase</fullName>
    </alternativeName>
    <alternativeName>
        <fullName evidence="1">Ketol-acid reductoisomerase type 1</fullName>
    </alternativeName>
    <alternativeName>
        <fullName evidence="1">Ketol-acid reductoisomerase type I</fullName>
    </alternativeName>
</protein>
<keyword id="KW-0028">Amino-acid biosynthesis</keyword>
<keyword id="KW-0100">Branched-chain amino acid biosynthesis</keyword>
<keyword id="KW-0460">Magnesium</keyword>
<keyword id="KW-0479">Metal-binding</keyword>
<keyword id="KW-0521">NADP</keyword>
<keyword id="KW-0560">Oxidoreductase</keyword>
<evidence type="ECO:0000255" key="1">
    <source>
        <dbReference type="HAMAP-Rule" id="MF_00435"/>
    </source>
</evidence>
<evidence type="ECO:0000255" key="2">
    <source>
        <dbReference type="PROSITE-ProRule" id="PRU01197"/>
    </source>
</evidence>
<evidence type="ECO:0000255" key="3">
    <source>
        <dbReference type="PROSITE-ProRule" id="PRU01198"/>
    </source>
</evidence>
<name>ILVC_DEHMB</name>
<gene>
    <name evidence="1" type="primary">ilvC</name>
    <name type="ordered locus">DehaBAV1_0750</name>
</gene>
<organism>
    <name type="scientific">Dehalococcoides mccartyi (strain ATCC BAA-2100 / JCM 16839 / KCTC 5957 / BAV1)</name>
    <dbReference type="NCBI Taxonomy" id="216389"/>
    <lineage>
        <taxon>Bacteria</taxon>
        <taxon>Bacillati</taxon>
        <taxon>Chloroflexota</taxon>
        <taxon>Dehalococcoidia</taxon>
        <taxon>Dehalococcoidales</taxon>
        <taxon>Dehalococcoidaceae</taxon>
        <taxon>Dehalococcoides</taxon>
    </lineage>
</organism>
<reference key="1">
    <citation type="submission" date="2007-05" db="EMBL/GenBank/DDBJ databases">
        <title>Complete sequence of Dehalococcoides sp. BAV1.</title>
        <authorList>
            <consortium name="US DOE Joint Genome Institute"/>
            <person name="Copeland A."/>
            <person name="Lucas S."/>
            <person name="Lapidus A."/>
            <person name="Barry K."/>
            <person name="Detter J.C."/>
            <person name="Glavina del Rio T."/>
            <person name="Hammon N."/>
            <person name="Israni S."/>
            <person name="Pitluck S."/>
            <person name="Lowry S."/>
            <person name="Clum A."/>
            <person name="Schmutz J."/>
            <person name="Larimer F."/>
            <person name="Land M."/>
            <person name="Hauser L."/>
            <person name="Kyrpides N."/>
            <person name="Kim E."/>
            <person name="Ritalahti K.M."/>
            <person name="Loeffler F."/>
            <person name="Richardson P."/>
        </authorList>
    </citation>
    <scope>NUCLEOTIDE SEQUENCE [LARGE SCALE GENOMIC DNA]</scope>
    <source>
        <strain>ATCC BAA-2100 / JCM 16839 / KCTC 5957 / BAV1</strain>
    </source>
</reference>